<reference key="1">
    <citation type="journal article" date="1989" name="J. Biol. Chem.">
        <title>Molecular cloning and sequencing of a cDNA encoding N alpha-acetyltransferase from Saccharomyces cerevisiae.</title>
        <authorList>
            <person name="Lee F.-J.S."/>
            <person name="Lin L.-W."/>
            <person name="Smith J.A."/>
        </authorList>
    </citation>
    <scope>NUCLEOTIDE SEQUENCE [MRNA]</scope>
    <scope>PROTEIN SEQUENCE OF 61-101; 130-142; 151-159; 301-307; 313-327; 331-354; 471-479; 587-596; 598-606; 614-622; 668-683 AND 685-705</scope>
</reference>
<reference key="2">
    <citation type="journal article" date="1989" name="EMBO J.">
        <title>Identification and characterization of genes and mutants for an N-terminal acetyltransferase from yeast.</title>
        <authorList>
            <person name="Mullen J.R."/>
            <person name="Kayne P.S."/>
            <person name="Moerschell R.P."/>
            <person name="Tsunasawa S."/>
            <person name="Gribskov M."/>
            <person name="Colavito-Shepanski M."/>
            <person name="Grunstein M."/>
            <person name="Sherman F."/>
            <person name="Sternglanz R."/>
        </authorList>
    </citation>
    <scope>NUCLEOTIDE SEQUENCE [GENOMIC DNA]</scope>
</reference>
<reference key="3">
    <citation type="journal article" date="1997" name="Nature">
        <title>The nucleotide sequence of Saccharomyces cerevisiae chromosome IV.</title>
        <authorList>
            <person name="Jacq C."/>
            <person name="Alt-Moerbe J."/>
            <person name="Andre B."/>
            <person name="Arnold W."/>
            <person name="Bahr A."/>
            <person name="Ballesta J.P.G."/>
            <person name="Bargues M."/>
            <person name="Baron L."/>
            <person name="Becker A."/>
            <person name="Biteau N."/>
            <person name="Bloecker H."/>
            <person name="Blugeon C."/>
            <person name="Boskovic J."/>
            <person name="Brandt P."/>
            <person name="Brueckner M."/>
            <person name="Buitrago M.J."/>
            <person name="Coster F."/>
            <person name="Delaveau T."/>
            <person name="del Rey F."/>
            <person name="Dujon B."/>
            <person name="Eide L.G."/>
            <person name="Garcia-Cantalejo J.M."/>
            <person name="Goffeau A."/>
            <person name="Gomez-Peris A."/>
            <person name="Granotier C."/>
            <person name="Hanemann V."/>
            <person name="Hankeln T."/>
            <person name="Hoheisel J.D."/>
            <person name="Jaeger W."/>
            <person name="Jimenez A."/>
            <person name="Jonniaux J.-L."/>
            <person name="Kraemer C."/>
            <person name="Kuester H."/>
            <person name="Laamanen P."/>
            <person name="Legros Y."/>
            <person name="Louis E.J."/>
            <person name="Moeller-Rieker S."/>
            <person name="Monnet A."/>
            <person name="Moro M."/>
            <person name="Mueller-Auer S."/>
            <person name="Nussbaumer B."/>
            <person name="Paricio N."/>
            <person name="Paulin L."/>
            <person name="Perea J."/>
            <person name="Perez-Alonso M."/>
            <person name="Perez-Ortin J.E."/>
            <person name="Pohl T.M."/>
            <person name="Prydz H."/>
            <person name="Purnelle B."/>
            <person name="Rasmussen S.W."/>
            <person name="Remacha M.A."/>
            <person name="Revuelta J.L."/>
            <person name="Rieger M."/>
            <person name="Salom D."/>
            <person name="Saluz H.P."/>
            <person name="Saiz J.E."/>
            <person name="Saren A.-M."/>
            <person name="Schaefer M."/>
            <person name="Scharfe M."/>
            <person name="Schmidt E.R."/>
            <person name="Schneider C."/>
            <person name="Scholler P."/>
            <person name="Schwarz S."/>
            <person name="Soler-Mira A."/>
            <person name="Urrestarazu L.A."/>
            <person name="Verhasselt P."/>
            <person name="Vissers S."/>
            <person name="Voet M."/>
            <person name="Volckaert G."/>
            <person name="Wagner G."/>
            <person name="Wambutt R."/>
            <person name="Wedler E."/>
            <person name="Wedler H."/>
            <person name="Woelfl S."/>
            <person name="Harris D.E."/>
            <person name="Bowman S."/>
            <person name="Brown D."/>
            <person name="Churcher C.M."/>
            <person name="Connor R."/>
            <person name="Dedman K."/>
            <person name="Gentles S."/>
            <person name="Hamlin N."/>
            <person name="Hunt S."/>
            <person name="Jones L."/>
            <person name="McDonald S."/>
            <person name="Murphy L.D."/>
            <person name="Niblett D."/>
            <person name="Odell C."/>
            <person name="Oliver K."/>
            <person name="Rajandream M.A."/>
            <person name="Richards C."/>
            <person name="Shore L."/>
            <person name="Walsh S.V."/>
            <person name="Barrell B.G."/>
            <person name="Dietrich F.S."/>
            <person name="Mulligan J.T."/>
            <person name="Allen E."/>
            <person name="Araujo R."/>
            <person name="Aviles E."/>
            <person name="Berno A."/>
            <person name="Carpenter J."/>
            <person name="Chen E."/>
            <person name="Cherry J.M."/>
            <person name="Chung E."/>
            <person name="Duncan M."/>
            <person name="Hunicke-Smith S."/>
            <person name="Hyman R.W."/>
            <person name="Komp C."/>
            <person name="Lashkari D."/>
            <person name="Lew H."/>
            <person name="Lin D."/>
            <person name="Mosedale D."/>
            <person name="Nakahara K."/>
            <person name="Namath A."/>
            <person name="Oefner P."/>
            <person name="Oh C."/>
            <person name="Petel F.X."/>
            <person name="Roberts D."/>
            <person name="Schramm S."/>
            <person name="Schroeder M."/>
            <person name="Shogren T."/>
            <person name="Shroff N."/>
            <person name="Winant A."/>
            <person name="Yelton M.A."/>
            <person name="Botstein D."/>
            <person name="Davis R.W."/>
            <person name="Johnston M."/>
            <person name="Andrews S."/>
            <person name="Brinkman R."/>
            <person name="Cooper J."/>
            <person name="Ding H."/>
            <person name="Du Z."/>
            <person name="Favello A."/>
            <person name="Fulton L."/>
            <person name="Gattung S."/>
            <person name="Greco T."/>
            <person name="Hallsworth K."/>
            <person name="Hawkins J."/>
            <person name="Hillier L.W."/>
            <person name="Jier M."/>
            <person name="Johnson D."/>
            <person name="Johnston L."/>
            <person name="Kirsten J."/>
            <person name="Kucaba T."/>
            <person name="Langston Y."/>
            <person name="Latreille P."/>
            <person name="Le T."/>
            <person name="Mardis E."/>
            <person name="Menezes S."/>
            <person name="Miller N."/>
            <person name="Nhan M."/>
            <person name="Pauley A."/>
            <person name="Peluso D."/>
            <person name="Rifkin L."/>
            <person name="Riles L."/>
            <person name="Taich A."/>
            <person name="Trevaskis E."/>
            <person name="Vignati D."/>
            <person name="Wilcox L."/>
            <person name="Wohldman P."/>
            <person name="Vaudin M."/>
            <person name="Wilson R."/>
            <person name="Waterston R."/>
            <person name="Albermann K."/>
            <person name="Hani J."/>
            <person name="Heumann K."/>
            <person name="Kleine K."/>
            <person name="Mewes H.-W."/>
            <person name="Zollner A."/>
            <person name="Zaccaria P."/>
        </authorList>
    </citation>
    <scope>NUCLEOTIDE SEQUENCE [LARGE SCALE GENOMIC DNA]</scope>
    <source>
        <strain>ATCC 204508 / S288c</strain>
    </source>
</reference>
<reference key="4">
    <citation type="journal article" date="2014" name="G3 (Bethesda)">
        <title>The reference genome sequence of Saccharomyces cerevisiae: Then and now.</title>
        <authorList>
            <person name="Engel S.R."/>
            <person name="Dietrich F.S."/>
            <person name="Fisk D.G."/>
            <person name="Binkley G."/>
            <person name="Balakrishnan R."/>
            <person name="Costanzo M.C."/>
            <person name="Dwight S.S."/>
            <person name="Hitz B.C."/>
            <person name="Karra K."/>
            <person name="Nash R.S."/>
            <person name="Weng S."/>
            <person name="Wong E.D."/>
            <person name="Lloyd P."/>
            <person name="Skrzypek M.S."/>
            <person name="Miyasato S.R."/>
            <person name="Simison M."/>
            <person name="Cherry J.M."/>
        </authorList>
    </citation>
    <scope>GENOME REANNOTATION</scope>
    <source>
        <strain>ATCC 204508 / S288c</strain>
    </source>
</reference>
<reference key="5">
    <citation type="journal article" date="1992" name="EMBO J.">
        <title>ARD1 and NAT1 proteins form a complex that has N-terminal acetyltransferase activity.</title>
        <authorList>
            <person name="Park E.C."/>
            <person name="Szostak J.W."/>
        </authorList>
    </citation>
    <scope>FUNCTION</scope>
    <scope>INTERACTION WITH ARD1</scope>
</reference>
<reference key="6">
    <citation type="journal article" date="2003" name="Mol. Cell. Biol.">
        <title>The yeast N(alpha)-acetyltransferase NatA is quantitatively anchored to the ribosome and interacts with nascent polypeptides.</title>
        <authorList>
            <person name="Gautschi M."/>
            <person name="Just S."/>
            <person name="Mun A."/>
            <person name="Ross S."/>
            <person name="Rucknagel P."/>
            <person name="Dubaquie Y."/>
            <person name="Ehrenhofer-Murray A."/>
            <person name="Rospert S."/>
        </authorList>
    </citation>
    <scope>FUNCTION</scope>
    <scope>IDENTIFICATION IN THE NATA COMPLEX</scope>
</reference>
<reference key="7">
    <citation type="journal article" date="2003" name="Nature">
        <title>Global analysis of protein localization in budding yeast.</title>
        <authorList>
            <person name="Huh W.-K."/>
            <person name="Falvo J.V."/>
            <person name="Gerke L.C."/>
            <person name="Carroll A.S."/>
            <person name="Howson R.W."/>
            <person name="Weissman J.S."/>
            <person name="O'Shea E.K."/>
        </authorList>
    </citation>
    <scope>SUBCELLULAR LOCATION [LARGE SCALE ANALYSIS]</scope>
</reference>
<reference key="8">
    <citation type="journal article" date="2003" name="Nature">
        <title>Global analysis of protein expression in yeast.</title>
        <authorList>
            <person name="Ghaemmaghami S."/>
            <person name="Huh W.-K."/>
            <person name="Bower K."/>
            <person name="Howson R.W."/>
            <person name="Belle A."/>
            <person name="Dephoure N."/>
            <person name="O'Shea E.K."/>
            <person name="Weissman J.S."/>
        </authorList>
    </citation>
    <scope>LEVEL OF PROTEIN EXPRESSION [LARGE SCALE ANALYSIS]</scope>
</reference>
<reference key="9">
    <citation type="journal article" date="2008" name="Mol. Cell. Proteomics">
        <title>A multidimensional chromatography technology for in-depth phosphoproteome analysis.</title>
        <authorList>
            <person name="Albuquerque C.P."/>
            <person name="Smolka M.B."/>
            <person name="Payne S.H."/>
            <person name="Bafna V."/>
            <person name="Eng J."/>
            <person name="Zhou H."/>
        </authorList>
    </citation>
    <scope>PHOSPHORYLATION [LARGE SCALE ANALYSIS] AT SER-674</scope>
    <scope>IDENTIFICATION BY MASS SPECTROMETRY [LARGE SCALE ANALYSIS]</scope>
</reference>
<gene>
    <name type="primary">NAT1</name>
    <name type="synonym">AAA1</name>
    <name type="ordered locus">YDL040C</name>
    <name type="ORF">D2720</name>
</gene>
<feature type="initiator methionine" description="Removed" evidence="7">
    <location>
        <position position="1"/>
    </location>
</feature>
<feature type="chain" id="PRO_0000096739" description="N-terminal acetyltransferase A complex subunit NAT1">
    <location>
        <begin position="2"/>
        <end position="854"/>
    </location>
</feature>
<feature type="repeat" description="TPR 1">
    <location>
        <begin position="20"/>
        <end position="53"/>
    </location>
</feature>
<feature type="repeat" description="TPR 2">
    <location>
        <begin position="54"/>
        <end position="87"/>
    </location>
</feature>
<feature type="repeat" description="TPR 3">
    <location>
        <begin position="91"/>
        <end position="124"/>
    </location>
</feature>
<feature type="repeat" description="TPR 4">
    <location>
        <begin position="126"/>
        <end position="162"/>
    </location>
</feature>
<feature type="repeat" description="TPR 5">
    <location>
        <begin position="241"/>
        <end position="274"/>
    </location>
</feature>
<feature type="repeat" description="TPR 6">
    <location>
        <begin position="384"/>
        <end position="417"/>
    </location>
</feature>
<feature type="repeat" description="TPR 7">
    <location>
        <begin position="452"/>
        <end position="485"/>
    </location>
</feature>
<feature type="repeat" description="TPR 8">
    <location>
        <begin position="728"/>
        <end position="761"/>
    </location>
</feature>
<feature type="region of interest" description="Disordered" evidence="2">
    <location>
        <begin position="626"/>
        <end position="668"/>
    </location>
</feature>
<feature type="coiled-coil region" evidence="1">
    <location>
        <begin position="623"/>
        <end position="667"/>
    </location>
</feature>
<feature type="modified residue" description="N-acetylserine" evidence="1">
    <location>
        <position position="2"/>
    </location>
</feature>
<feature type="modified residue" description="Phosphoserine" evidence="8">
    <location>
        <position position="674"/>
    </location>
</feature>
<feature type="helix" evidence="10">
    <location>
        <begin position="24"/>
        <end position="32"/>
    </location>
</feature>
<feature type="helix" evidence="10">
    <location>
        <begin position="36"/>
        <end position="49"/>
    </location>
</feature>
<feature type="helix" evidence="10">
    <location>
        <begin position="54"/>
        <end position="66"/>
    </location>
</feature>
<feature type="helix" evidence="10">
    <location>
        <begin position="70"/>
        <end position="83"/>
    </location>
</feature>
<feature type="helix" evidence="10">
    <location>
        <begin position="91"/>
        <end position="103"/>
    </location>
</feature>
<feature type="helix" evidence="10">
    <location>
        <begin position="107"/>
        <end position="119"/>
    </location>
</feature>
<feature type="helix" evidence="10">
    <location>
        <begin position="126"/>
        <end position="138"/>
    </location>
</feature>
<feature type="helix" evidence="10">
    <location>
        <begin position="141"/>
        <end position="154"/>
    </location>
</feature>
<feature type="helix" evidence="10">
    <location>
        <begin position="159"/>
        <end position="171"/>
    </location>
</feature>
<feature type="helix" evidence="10">
    <location>
        <begin position="175"/>
        <end position="189"/>
    </location>
</feature>
<feature type="helix" evidence="10">
    <location>
        <begin position="195"/>
        <end position="197"/>
    </location>
</feature>
<feature type="helix" evidence="10">
    <location>
        <begin position="198"/>
        <end position="216"/>
    </location>
</feature>
<feature type="helix" evidence="10">
    <location>
        <begin position="220"/>
        <end position="233"/>
    </location>
</feature>
<feature type="helix" evidence="10">
    <location>
        <begin position="234"/>
        <end position="236"/>
    </location>
</feature>
<feature type="helix" evidence="10">
    <location>
        <begin position="240"/>
        <end position="253"/>
    </location>
</feature>
<feature type="helix" evidence="10">
    <location>
        <begin position="257"/>
        <end position="270"/>
    </location>
</feature>
<feature type="helix" evidence="10">
    <location>
        <begin position="275"/>
        <end position="284"/>
    </location>
</feature>
<feature type="helix" evidence="11">
    <location>
        <begin position="287"/>
        <end position="289"/>
    </location>
</feature>
<feature type="helix" evidence="10">
    <location>
        <begin position="291"/>
        <end position="304"/>
    </location>
</feature>
<feature type="strand" evidence="11">
    <location>
        <begin position="305"/>
        <end position="307"/>
    </location>
</feature>
<feature type="helix" evidence="10">
    <location>
        <begin position="309"/>
        <end position="313"/>
    </location>
</feature>
<feature type="helix" evidence="10">
    <location>
        <begin position="314"/>
        <end position="317"/>
    </location>
</feature>
<feature type="helix" evidence="10">
    <location>
        <begin position="322"/>
        <end position="339"/>
    </location>
</feature>
<feature type="helix" evidence="10">
    <location>
        <begin position="344"/>
        <end position="354"/>
    </location>
</feature>
<feature type="helix" evidence="10">
    <location>
        <begin position="356"/>
        <end position="372"/>
    </location>
</feature>
<feature type="turn" evidence="10">
    <location>
        <begin position="376"/>
        <end position="378"/>
    </location>
</feature>
<feature type="helix" evidence="10">
    <location>
        <begin position="380"/>
        <end position="396"/>
    </location>
</feature>
<feature type="helix" evidence="10">
    <location>
        <begin position="400"/>
        <end position="413"/>
    </location>
</feature>
<feature type="helix" evidence="10">
    <location>
        <begin position="418"/>
        <end position="431"/>
    </location>
</feature>
<feature type="helix" evidence="10">
    <location>
        <begin position="434"/>
        <end position="447"/>
    </location>
</feature>
<feature type="helix" evidence="10">
    <location>
        <begin position="452"/>
        <end position="464"/>
    </location>
</feature>
<feature type="helix" evidence="10">
    <location>
        <begin position="468"/>
        <end position="475"/>
    </location>
</feature>
<feature type="turn" evidence="9">
    <location>
        <begin position="478"/>
        <end position="480"/>
    </location>
</feature>
<feature type="strand" evidence="10">
    <location>
        <begin position="484"/>
        <end position="487"/>
    </location>
</feature>
<feature type="helix" evidence="10">
    <location>
        <begin position="488"/>
        <end position="493"/>
    </location>
</feature>
<feature type="helix" evidence="10">
    <location>
        <begin position="497"/>
        <end position="523"/>
    </location>
</feature>
<feature type="helix" evidence="10">
    <location>
        <begin position="536"/>
        <end position="570"/>
    </location>
</feature>
<feature type="helix" evidence="10">
    <location>
        <begin position="571"/>
        <end position="574"/>
    </location>
</feature>
<feature type="helix" evidence="10">
    <location>
        <begin position="575"/>
        <end position="582"/>
    </location>
</feature>
<feature type="helix" evidence="10">
    <location>
        <begin position="585"/>
        <end position="595"/>
    </location>
</feature>
<feature type="helix" evidence="10">
    <location>
        <begin position="596"/>
        <end position="600"/>
    </location>
</feature>
<feature type="helix" evidence="10">
    <location>
        <begin position="602"/>
        <end position="621"/>
    </location>
</feature>
<feature type="turn" evidence="11">
    <location>
        <begin position="623"/>
        <end position="625"/>
    </location>
</feature>
<feature type="turn" evidence="9">
    <location>
        <begin position="629"/>
        <end position="631"/>
    </location>
</feature>
<feature type="helix" evidence="10">
    <location>
        <begin position="662"/>
        <end position="669"/>
    </location>
</feature>
<feature type="turn" evidence="10">
    <location>
        <begin position="674"/>
        <end position="676"/>
    </location>
</feature>
<feature type="helix" evidence="10">
    <location>
        <begin position="683"/>
        <end position="686"/>
    </location>
</feature>
<feature type="helix" evidence="10">
    <location>
        <begin position="691"/>
        <end position="698"/>
    </location>
</feature>
<feature type="helix" evidence="10">
    <location>
        <begin position="700"/>
        <end position="706"/>
    </location>
</feature>
<feature type="turn" evidence="10">
    <location>
        <begin position="709"/>
        <end position="711"/>
    </location>
</feature>
<feature type="helix" evidence="10">
    <location>
        <begin position="714"/>
        <end position="721"/>
    </location>
</feature>
<feature type="turn" evidence="10">
    <location>
        <begin position="722"/>
        <end position="725"/>
    </location>
</feature>
<feature type="helix" evidence="10">
    <location>
        <begin position="727"/>
        <end position="741"/>
    </location>
</feature>
<feature type="strand" evidence="9">
    <location>
        <begin position="743"/>
        <end position="745"/>
    </location>
</feature>
<feature type="helix" evidence="10">
    <location>
        <begin position="746"/>
        <end position="758"/>
    </location>
</feature>
<feature type="strand" evidence="10">
    <location>
        <begin position="763"/>
        <end position="765"/>
    </location>
</feature>
<feature type="helix" evidence="10">
    <location>
        <begin position="767"/>
        <end position="781"/>
    </location>
</feature>
<feature type="turn" evidence="10">
    <location>
        <begin position="782"/>
        <end position="784"/>
    </location>
</feature>
<feature type="helix" evidence="10">
    <location>
        <begin position="787"/>
        <end position="791"/>
    </location>
</feature>
<feature type="helix" evidence="10">
    <location>
        <begin position="797"/>
        <end position="805"/>
    </location>
</feature>
<feature type="turn" evidence="11">
    <location>
        <begin position="806"/>
        <end position="808"/>
    </location>
</feature>
<feature type="helix" evidence="10">
    <location>
        <begin position="810"/>
        <end position="818"/>
    </location>
</feature>
<feature type="turn" evidence="10">
    <location>
        <begin position="819"/>
        <end position="822"/>
    </location>
</feature>
<feature type="helix" evidence="10">
    <location>
        <begin position="827"/>
        <end position="837"/>
    </location>
</feature>
<feature type="turn" evidence="9">
    <location>
        <begin position="838"/>
        <end position="840"/>
    </location>
</feature>
<feature type="helix" evidence="10">
    <location>
        <begin position="843"/>
        <end position="852"/>
    </location>
</feature>
<dbReference type="EMBL" id="M23166">
    <property type="protein sequence ID" value="AAA88728.1"/>
    <property type="molecule type" value="mRNA"/>
</dbReference>
<dbReference type="EMBL" id="X15135">
    <property type="protein sequence ID" value="CAA33233.1"/>
    <property type="molecule type" value="Genomic_DNA"/>
</dbReference>
<dbReference type="EMBL" id="Z71781">
    <property type="protein sequence ID" value="CAA96449.1"/>
    <property type="molecule type" value="Genomic_DNA"/>
</dbReference>
<dbReference type="EMBL" id="Z74088">
    <property type="protein sequence ID" value="CAA98599.1"/>
    <property type="molecule type" value="Genomic_DNA"/>
</dbReference>
<dbReference type="EMBL" id="BK006938">
    <property type="protein sequence ID" value="DAA11815.1"/>
    <property type="molecule type" value="Genomic_DNA"/>
</dbReference>
<dbReference type="PIR" id="S05783">
    <property type="entry name" value="XYBYT1"/>
</dbReference>
<dbReference type="RefSeq" id="NP_010244.1">
    <property type="nucleotide sequence ID" value="NM_001180099.1"/>
</dbReference>
<dbReference type="PDB" id="4HNW">
    <property type="method" value="X-ray"/>
    <property type="resolution" value="2.80 A"/>
    <property type="chains" value="A=1-854"/>
</dbReference>
<dbReference type="PDB" id="4HNY">
    <property type="method" value="X-ray"/>
    <property type="resolution" value="2.25 A"/>
    <property type="chains" value="A/C=1-854"/>
</dbReference>
<dbReference type="PDB" id="4XNH">
    <property type="method" value="X-ray"/>
    <property type="resolution" value="2.10 A"/>
    <property type="chains" value="A=1-854"/>
</dbReference>
<dbReference type="PDB" id="4XPD">
    <property type="method" value="X-ray"/>
    <property type="resolution" value="2.81 A"/>
    <property type="chains" value="A=1-854"/>
</dbReference>
<dbReference type="PDB" id="4Y49">
    <property type="method" value="X-ray"/>
    <property type="resolution" value="3.95 A"/>
    <property type="chains" value="A/G/M=1-854"/>
</dbReference>
<dbReference type="PDB" id="6HD5">
    <property type="method" value="EM"/>
    <property type="resolution" value="4.80 A"/>
    <property type="chains" value="t=1-854"/>
</dbReference>
<dbReference type="PDB" id="6HD7">
    <property type="method" value="EM"/>
    <property type="resolution" value="3.40 A"/>
    <property type="chains" value="t=1-854"/>
</dbReference>
<dbReference type="PDB" id="6O07">
    <property type="method" value="X-ray"/>
    <property type="resolution" value="2.70 A"/>
    <property type="chains" value="A=1-854"/>
</dbReference>
<dbReference type="PDBsum" id="4HNW"/>
<dbReference type="PDBsum" id="4HNY"/>
<dbReference type="PDBsum" id="4XNH"/>
<dbReference type="PDBsum" id="4XPD"/>
<dbReference type="PDBsum" id="4Y49"/>
<dbReference type="PDBsum" id="6HD5"/>
<dbReference type="PDBsum" id="6HD7"/>
<dbReference type="PDBsum" id="6O07"/>
<dbReference type="EMDB" id="EMD-0201"/>
<dbReference type="EMDB" id="EMD-0202"/>
<dbReference type="SMR" id="P12945"/>
<dbReference type="BioGRID" id="32018">
    <property type="interactions" value="330"/>
</dbReference>
<dbReference type="ComplexPortal" id="CPX-783">
    <property type="entry name" value="NatA N-alpha-acetyltransferase complex"/>
</dbReference>
<dbReference type="DIP" id="DIP-6329N"/>
<dbReference type="FunCoup" id="P12945">
    <property type="interactions" value="1284"/>
</dbReference>
<dbReference type="IntAct" id="P12945">
    <property type="interactions" value="63"/>
</dbReference>
<dbReference type="MINT" id="P12945"/>
<dbReference type="STRING" id="4932.YDL040C"/>
<dbReference type="iPTMnet" id="P12945"/>
<dbReference type="PaxDb" id="4932-YDL040C"/>
<dbReference type="PeptideAtlas" id="P12945"/>
<dbReference type="EnsemblFungi" id="YDL040C_mRNA">
    <property type="protein sequence ID" value="YDL040C"/>
    <property type="gene ID" value="YDL040C"/>
</dbReference>
<dbReference type="GeneID" id="851521"/>
<dbReference type="KEGG" id="sce:YDL040C"/>
<dbReference type="AGR" id="SGD:S000002198"/>
<dbReference type="SGD" id="S000002198">
    <property type="gene designation" value="NAT1"/>
</dbReference>
<dbReference type="VEuPathDB" id="FungiDB:YDL040C"/>
<dbReference type="eggNOG" id="KOG1156">
    <property type="taxonomic scope" value="Eukaryota"/>
</dbReference>
<dbReference type="GeneTree" id="ENSGT00950000183174"/>
<dbReference type="HOGENOM" id="CLU_006686_1_1_1"/>
<dbReference type="InParanoid" id="P12945"/>
<dbReference type="OMA" id="MEMRADY"/>
<dbReference type="OrthoDB" id="10263032at2759"/>
<dbReference type="BioCyc" id="YEAST:YDL040C-MONOMER"/>
<dbReference type="BRENDA" id="2.3.1.255">
    <property type="organism ID" value="984"/>
</dbReference>
<dbReference type="BRENDA" id="2.3.1.258">
    <property type="organism ID" value="984"/>
</dbReference>
<dbReference type="BioGRID-ORCS" id="851521">
    <property type="hits" value="1 hit in 10 CRISPR screens"/>
</dbReference>
<dbReference type="EvolutionaryTrace" id="P12945"/>
<dbReference type="PRO" id="PR:P12945"/>
<dbReference type="Proteomes" id="UP000002311">
    <property type="component" value="Chromosome IV"/>
</dbReference>
<dbReference type="RNAct" id="P12945">
    <property type="molecule type" value="protein"/>
</dbReference>
<dbReference type="GO" id="GO:0005737">
    <property type="term" value="C:cytoplasm"/>
    <property type="evidence" value="ECO:0000318"/>
    <property type="project" value="GO_Central"/>
</dbReference>
<dbReference type="GO" id="GO:0005739">
    <property type="term" value="C:mitochondrion"/>
    <property type="evidence" value="ECO:0007005"/>
    <property type="project" value="SGD"/>
</dbReference>
<dbReference type="GO" id="GO:0031415">
    <property type="term" value="C:NatA complex"/>
    <property type="evidence" value="ECO:0000314"/>
    <property type="project" value="SGD"/>
</dbReference>
<dbReference type="GO" id="GO:0010698">
    <property type="term" value="F:acetyltransferase activator activity"/>
    <property type="evidence" value="ECO:0000318"/>
    <property type="project" value="GO_Central"/>
</dbReference>
<dbReference type="GO" id="GO:0043022">
    <property type="term" value="F:ribosome binding"/>
    <property type="evidence" value="ECO:0000314"/>
    <property type="project" value="SGD"/>
</dbReference>
<dbReference type="FunFam" id="1.25.40.1010:FF:000005">
    <property type="entry name" value="N-terminal acetyltransferase A complex subunit NAT1"/>
    <property type="match status" value="1"/>
</dbReference>
<dbReference type="FunFam" id="1.25.40.1040:FF:000003">
    <property type="entry name" value="N-terminal acetyltransferase A, auxiliary subunit"/>
    <property type="match status" value="1"/>
</dbReference>
<dbReference type="Gene3D" id="1.25.40.1010">
    <property type="match status" value="1"/>
</dbReference>
<dbReference type="Gene3D" id="1.25.40.1040">
    <property type="match status" value="1"/>
</dbReference>
<dbReference type="InterPro" id="IPR021183">
    <property type="entry name" value="NatA_aux_su"/>
</dbReference>
<dbReference type="InterPro" id="IPR011990">
    <property type="entry name" value="TPR-like_helical_dom_sf"/>
</dbReference>
<dbReference type="InterPro" id="IPR019734">
    <property type="entry name" value="TPR_rpt"/>
</dbReference>
<dbReference type="PANTHER" id="PTHR22767:SF2">
    <property type="entry name" value="N(ALPHA)-ACETYLTRANSFERASE 15_16, ISOFORM A"/>
    <property type="match status" value="1"/>
</dbReference>
<dbReference type="PANTHER" id="PTHR22767">
    <property type="entry name" value="N-TERMINAL ACETYLTRANSFERASE-RELATED"/>
    <property type="match status" value="1"/>
</dbReference>
<dbReference type="Pfam" id="PF12569">
    <property type="entry name" value="NatA_aux_su"/>
    <property type="match status" value="2"/>
</dbReference>
<dbReference type="PIRSF" id="PIRSF000422">
    <property type="entry name" value="N-terminal-AcTrfase-A_aux_su"/>
    <property type="match status" value="1"/>
</dbReference>
<dbReference type="SMART" id="SM00028">
    <property type="entry name" value="TPR"/>
    <property type="match status" value="6"/>
</dbReference>
<dbReference type="SUPFAM" id="SSF48452">
    <property type="entry name" value="TPR-like"/>
    <property type="match status" value="2"/>
</dbReference>
<evidence type="ECO:0000255" key="1"/>
<evidence type="ECO:0000256" key="2">
    <source>
        <dbReference type="SAM" id="MobiDB-lite"/>
    </source>
</evidence>
<evidence type="ECO:0000269" key="3">
    <source>
    </source>
</evidence>
<evidence type="ECO:0000269" key="4">
    <source>
    </source>
</evidence>
<evidence type="ECO:0000269" key="5">
    <source>
    </source>
</evidence>
<evidence type="ECO:0000269" key="6">
    <source>
    </source>
</evidence>
<evidence type="ECO:0000305" key="7"/>
<evidence type="ECO:0007744" key="8">
    <source>
    </source>
</evidence>
<evidence type="ECO:0007829" key="9">
    <source>
        <dbReference type="PDB" id="4HNY"/>
    </source>
</evidence>
<evidence type="ECO:0007829" key="10">
    <source>
        <dbReference type="PDB" id="4XNH"/>
    </source>
</evidence>
<evidence type="ECO:0007829" key="11">
    <source>
        <dbReference type="PDB" id="6O07"/>
    </source>
</evidence>
<name>NAT1_YEAST</name>
<organism>
    <name type="scientific">Saccharomyces cerevisiae (strain ATCC 204508 / S288c)</name>
    <name type="common">Baker's yeast</name>
    <dbReference type="NCBI Taxonomy" id="559292"/>
    <lineage>
        <taxon>Eukaryota</taxon>
        <taxon>Fungi</taxon>
        <taxon>Dikarya</taxon>
        <taxon>Ascomycota</taxon>
        <taxon>Saccharomycotina</taxon>
        <taxon>Saccharomycetes</taxon>
        <taxon>Saccharomycetales</taxon>
        <taxon>Saccharomycetaceae</taxon>
        <taxon>Saccharomyces</taxon>
    </lineage>
</organism>
<accession>P12945</accession>
<accession>D6VRV5</accession>
<comment type="function">
    <text evidence="3 6">Non-catalytic component of the NatA N-terminal acetyltransferase, which catalyzes acetylation of proteins beginning with Met-Ser, Met-Gly and Met-Ala. N-acetylation plays a role in normal eukaryotic translation and processing, protect against proteolytic degradation and protein turnover. NAT1 anchors ARD1 and NAT5 to the ribosome and may present the N termini of nascent polypeptides for acetylation.</text>
</comment>
<comment type="subunit">
    <text evidence="3">Component of the N-terminal acetyltransferase A (NatA) complex, which is composed of ARD1, NAT1 and NAT5. Can self-associate. NAT1 associates with the nascent polypeptide chain and the ribosome.</text>
</comment>
<comment type="interaction">
    <interactant intactId="EBI-11868">
        <id>P12945</id>
    </interactant>
    <interactant intactId="EBI-2796">
        <id>P07347</id>
        <label>ARD1</label>
    </interactant>
    <organismsDiffer>false</organismsDiffer>
    <experiments>11</experiments>
</comment>
<comment type="subcellular location">
    <subcellularLocation>
        <location evidence="4">Cytoplasm</location>
    </subcellularLocation>
</comment>
<comment type="PTM">
    <text>The N-terminus is blocked.</text>
</comment>
<comment type="miscellaneous">
    <text evidence="5">Present with 7600 molecules/cell in log phase SD medium.</text>
</comment>
<keyword id="KW-0002">3D-structure</keyword>
<keyword id="KW-0007">Acetylation</keyword>
<keyword id="KW-0175">Coiled coil</keyword>
<keyword id="KW-0963">Cytoplasm</keyword>
<keyword id="KW-0903">Direct protein sequencing</keyword>
<keyword id="KW-0597">Phosphoprotein</keyword>
<keyword id="KW-1185">Reference proteome</keyword>
<keyword id="KW-0677">Repeat</keyword>
<keyword id="KW-0802">TPR repeat</keyword>
<protein>
    <recommendedName>
        <fullName>N-terminal acetyltransferase A complex subunit NAT1</fullName>
        <shortName>NatA complex subunit NAT1</shortName>
    </recommendedName>
    <alternativeName>
        <fullName>Amino-terminal, alpha-amino, acetyltransferase 1</fullName>
    </alternativeName>
</protein>
<proteinExistence type="evidence at protein level"/>
<sequence length="854" mass="98905">MSRKRSTKPKPAAKIALKKENDQFLEALKLYEGKQYKKSLKLLDAILKKDGSHVDSLALKGLDLYSVGEKDDAASYVANAIRKIEGASASPICCHVLGIYMRNTKEYKESIKWFTAALNNGSTNKQIYRDLATLQSQIGDFKNALVSRKKYWEAFLGYRANWTSLAVAQDVNGERQQAINTLSQFEKLAEGKISDSEKYEHSECLMYKNDIMYKAASDNQDKLQNVLKHLNDIEPCVFDKFGLLERKATIYMKLGQLKDASIVYRTLIKRNPDNFKYYKLLEVSLGIQGDNKLKKALYGKLEQFYPRCEPPKFIPLTFLQDKEELSKKLREYVLPQLERGVPATFSNVKPLYQRRKSKVSPLLEKIVLDYLSGLDPTQDPIPFIWTNYYLSQHFLFLKDFPKAQEYIDAALDHTPTLVEFYILKARILKHLGLMDTAAGILEEGRQLDLQDRFINCKTVKYFLRANNIDKAVEVASLFTKNDDSVNGIKDLHLVEASWFIVEQAEAYYRLYLDRKKKLDDLASLKKEVESDKSEQIANDIKENQWLVRKYKGLALKRFNAIPKFYKQFEDDQLDFHSYCMRKGTPRAYLEMLEWGKALYTKPMYVRAMKEASKLYFQMHDDRLKRKSDSLDENSDEIQNNGQNSSSQKKKAKKEAAAMNKRKETEAKSVAAYPSDQDNDVFGEKLIETSTPMEDFATEFYNNYSMQVREDERDYILDFEFNYRIGKLALCFASLNKFAKRFGTTSGLFGSMAIVLLHATRNDTPFDPILKKVVTKSLEKEYSENFPLNEISNNSFDWLNFYQEKFGKNDINGLLFLYRYRDDVPIGSSNLKEMIISSLSPLEPHSQNEILQYYL</sequence>